<dbReference type="EMBL" id="EU118126">
    <property type="protein sequence ID" value="ABV02383.1"/>
    <property type="molecule type" value="Genomic_DNA"/>
</dbReference>
<dbReference type="RefSeq" id="YP_001468343.1">
    <property type="nucleotide sequence ID" value="NC_009808.1"/>
</dbReference>
<dbReference type="SMR" id="A7Y3I5"/>
<dbReference type="GeneID" id="5601258"/>
<dbReference type="GO" id="GO:0009507">
    <property type="term" value="C:chloroplast"/>
    <property type="evidence" value="ECO:0007669"/>
    <property type="project" value="UniProtKB-SubCell"/>
</dbReference>
<dbReference type="GO" id="GO:1990904">
    <property type="term" value="C:ribonucleoprotein complex"/>
    <property type="evidence" value="ECO:0007669"/>
    <property type="project" value="UniProtKB-KW"/>
</dbReference>
<dbReference type="GO" id="GO:0005840">
    <property type="term" value="C:ribosome"/>
    <property type="evidence" value="ECO:0007669"/>
    <property type="project" value="UniProtKB-KW"/>
</dbReference>
<dbReference type="GO" id="GO:0019843">
    <property type="term" value="F:rRNA binding"/>
    <property type="evidence" value="ECO:0007669"/>
    <property type="project" value="UniProtKB-UniRule"/>
</dbReference>
<dbReference type="GO" id="GO:0003735">
    <property type="term" value="F:structural constituent of ribosome"/>
    <property type="evidence" value="ECO:0007669"/>
    <property type="project" value="InterPro"/>
</dbReference>
<dbReference type="GO" id="GO:0006412">
    <property type="term" value="P:translation"/>
    <property type="evidence" value="ECO:0007669"/>
    <property type="project" value="UniProtKB-UniRule"/>
</dbReference>
<dbReference type="FunFam" id="3.30.1490.10:FF:000001">
    <property type="entry name" value="30S ribosomal protein S8"/>
    <property type="match status" value="1"/>
</dbReference>
<dbReference type="FunFam" id="3.30.1370.30:FF:000004">
    <property type="entry name" value="30S ribosomal protein S8, chloroplastic"/>
    <property type="match status" value="1"/>
</dbReference>
<dbReference type="Gene3D" id="3.30.1370.30">
    <property type="match status" value="1"/>
</dbReference>
<dbReference type="Gene3D" id="3.30.1490.10">
    <property type="match status" value="1"/>
</dbReference>
<dbReference type="HAMAP" id="MF_01302_B">
    <property type="entry name" value="Ribosomal_uS8_B"/>
    <property type="match status" value="1"/>
</dbReference>
<dbReference type="InterPro" id="IPR000630">
    <property type="entry name" value="Ribosomal_uS8"/>
</dbReference>
<dbReference type="InterPro" id="IPR047863">
    <property type="entry name" value="Ribosomal_uS8_CS"/>
</dbReference>
<dbReference type="InterPro" id="IPR035987">
    <property type="entry name" value="Ribosomal_uS8_sf"/>
</dbReference>
<dbReference type="NCBIfam" id="NF001109">
    <property type="entry name" value="PRK00136.1"/>
    <property type="match status" value="1"/>
</dbReference>
<dbReference type="PANTHER" id="PTHR11758">
    <property type="entry name" value="40S RIBOSOMAL PROTEIN S15A"/>
    <property type="match status" value="1"/>
</dbReference>
<dbReference type="Pfam" id="PF00410">
    <property type="entry name" value="Ribosomal_S8"/>
    <property type="match status" value="1"/>
</dbReference>
<dbReference type="SUPFAM" id="SSF56047">
    <property type="entry name" value="Ribosomal protein S8"/>
    <property type="match status" value="1"/>
</dbReference>
<dbReference type="PROSITE" id="PS00053">
    <property type="entry name" value="RIBOSOMAL_S8"/>
    <property type="match status" value="1"/>
</dbReference>
<sequence length="134" mass="15796">MGRDTIAEIITSIRNADMDRKRVVRIASTNITENIVRILLREGFIENVRKHREKNKNFFVLTLRHRRNRKRPYRNIFNLKRISRPGLRIYSNYQRIPKILGGMGVVILSTSRGIMTDREARLEGIGGEILCYIW</sequence>
<comment type="function">
    <text evidence="1">One of the primary rRNA binding proteins, it binds directly to 16S rRNA central domain where it helps coordinate assembly of the platform of the 30S subunit.</text>
</comment>
<comment type="subunit">
    <text evidence="1">Part of the 30S ribosomal subunit.</text>
</comment>
<comment type="subcellular location">
    <subcellularLocation>
        <location>Plastid</location>
        <location>Chloroplast</location>
    </subcellularLocation>
</comment>
<comment type="similarity">
    <text evidence="2">Belongs to the universal ribosomal protein uS8 family.</text>
</comment>
<organism>
    <name type="scientific">Ipomoea purpurea</name>
    <name type="common">Common morning glory</name>
    <name type="synonym">Pharbitis purpurea</name>
    <dbReference type="NCBI Taxonomy" id="4121"/>
    <lineage>
        <taxon>Eukaryota</taxon>
        <taxon>Viridiplantae</taxon>
        <taxon>Streptophyta</taxon>
        <taxon>Embryophyta</taxon>
        <taxon>Tracheophyta</taxon>
        <taxon>Spermatophyta</taxon>
        <taxon>Magnoliopsida</taxon>
        <taxon>eudicotyledons</taxon>
        <taxon>Gunneridae</taxon>
        <taxon>Pentapetalae</taxon>
        <taxon>asterids</taxon>
        <taxon>lamiids</taxon>
        <taxon>Solanales</taxon>
        <taxon>Convolvulaceae</taxon>
        <taxon>Ipomoeeae</taxon>
        <taxon>Ipomoea</taxon>
    </lineage>
</organism>
<accession>A7Y3I5</accession>
<gene>
    <name type="primary">rps8</name>
</gene>
<feature type="chain" id="PRO_0000322030" description="Small ribosomal subunit protein uS8c">
    <location>
        <begin position="1"/>
        <end position="134"/>
    </location>
</feature>
<evidence type="ECO:0000250" key="1"/>
<evidence type="ECO:0000305" key="2"/>
<reference key="1">
    <citation type="journal article" date="2007" name="BMC Plant Biol.">
        <title>Complete plastid genome sequences suggest strong selection for retention of photosynthetic genes in the parasitic plant genus Cuscuta.</title>
        <authorList>
            <person name="McNeal J.R."/>
            <person name="Kuehl J.V."/>
            <person name="Boore J.L."/>
            <person name="dePamphilis C.W."/>
        </authorList>
    </citation>
    <scope>NUCLEOTIDE SEQUENCE [LARGE SCALE GENOMIC DNA]</scope>
</reference>
<geneLocation type="chloroplast"/>
<name>RR8_IPOPU</name>
<protein>
    <recommendedName>
        <fullName evidence="2">Small ribosomal subunit protein uS8c</fullName>
    </recommendedName>
    <alternativeName>
        <fullName>30S ribosomal protein S8, chloroplastic</fullName>
    </alternativeName>
</protein>
<keyword id="KW-0150">Chloroplast</keyword>
<keyword id="KW-0934">Plastid</keyword>
<keyword id="KW-0687">Ribonucleoprotein</keyword>
<keyword id="KW-0689">Ribosomal protein</keyword>
<keyword id="KW-0694">RNA-binding</keyword>
<keyword id="KW-0699">rRNA-binding</keyword>
<proteinExistence type="inferred from homology"/>